<reference key="1">
    <citation type="journal article" date="2010" name="Genome Biol. Evol.">
        <title>Continuing evolution of Burkholderia mallei through genome reduction and large-scale rearrangements.</title>
        <authorList>
            <person name="Losada L."/>
            <person name="Ronning C.M."/>
            <person name="DeShazer D."/>
            <person name="Woods D."/>
            <person name="Fedorova N."/>
            <person name="Kim H.S."/>
            <person name="Shabalina S.A."/>
            <person name="Pearson T.R."/>
            <person name="Brinkac L."/>
            <person name="Tan P."/>
            <person name="Nandi T."/>
            <person name="Crabtree J."/>
            <person name="Badger J."/>
            <person name="Beckstrom-Sternberg S."/>
            <person name="Saqib M."/>
            <person name="Schutzer S.E."/>
            <person name="Keim P."/>
            <person name="Nierman W.C."/>
        </authorList>
    </citation>
    <scope>NUCLEOTIDE SEQUENCE [LARGE SCALE GENOMIC DNA]</scope>
    <source>
        <strain>NCTC 10247</strain>
    </source>
</reference>
<organism>
    <name type="scientific">Burkholderia mallei (strain NCTC 10247)</name>
    <dbReference type="NCBI Taxonomy" id="320389"/>
    <lineage>
        <taxon>Bacteria</taxon>
        <taxon>Pseudomonadati</taxon>
        <taxon>Pseudomonadota</taxon>
        <taxon>Betaproteobacteria</taxon>
        <taxon>Burkholderiales</taxon>
        <taxon>Burkholderiaceae</taxon>
        <taxon>Burkholderia</taxon>
        <taxon>pseudomallei group</taxon>
    </lineage>
</organism>
<name>ENO_BURM7</name>
<proteinExistence type="inferred from homology"/>
<feature type="chain" id="PRO_1000019191" description="Enolase">
    <location>
        <begin position="1"/>
        <end position="427"/>
    </location>
</feature>
<feature type="active site" description="Proton donor" evidence="1">
    <location>
        <position position="205"/>
    </location>
</feature>
<feature type="active site" description="Proton acceptor" evidence="1">
    <location>
        <position position="337"/>
    </location>
</feature>
<feature type="binding site" evidence="1">
    <location>
        <position position="163"/>
    </location>
    <ligand>
        <name>(2R)-2-phosphoglycerate</name>
        <dbReference type="ChEBI" id="CHEBI:58289"/>
    </ligand>
</feature>
<feature type="binding site" evidence="1">
    <location>
        <position position="242"/>
    </location>
    <ligand>
        <name>Mg(2+)</name>
        <dbReference type="ChEBI" id="CHEBI:18420"/>
    </ligand>
</feature>
<feature type="binding site" evidence="1">
    <location>
        <position position="285"/>
    </location>
    <ligand>
        <name>Mg(2+)</name>
        <dbReference type="ChEBI" id="CHEBI:18420"/>
    </ligand>
</feature>
<feature type="binding site" evidence="1">
    <location>
        <position position="312"/>
    </location>
    <ligand>
        <name>Mg(2+)</name>
        <dbReference type="ChEBI" id="CHEBI:18420"/>
    </ligand>
</feature>
<feature type="binding site" evidence="1">
    <location>
        <position position="337"/>
    </location>
    <ligand>
        <name>(2R)-2-phosphoglycerate</name>
        <dbReference type="ChEBI" id="CHEBI:58289"/>
    </ligand>
</feature>
<feature type="binding site" evidence="1">
    <location>
        <position position="366"/>
    </location>
    <ligand>
        <name>(2R)-2-phosphoglycerate</name>
        <dbReference type="ChEBI" id="CHEBI:58289"/>
    </ligand>
</feature>
<feature type="binding site" evidence="1">
    <location>
        <position position="367"/>
    </location>
    <ligand>
        <name>(2R)-2-phosphoglycerate</name>
        <dbReference type="ChEBI" id="CHEBI:58289"/>
    </ligand>
</feature>
<feature type="binding site" evidence="1">
    <location>
        <position position="388"/>
    </location>
    <ligand>
        <name>(2R)-2-phosphoglycerate</name>
        <dbReference type="ChEBI" id="CHEBI:58289"/>
    </ligand>
</feature>
<protein>
    <recommendedName>
        <fullName evidence="1">Enolase</fullName>
        <ecNumber evidence="1">4.2.1.11</ecNumber>
    </recommendedName>
    <alternativeName>
        <fullName evidence="1">2-phospho-D-glycerate hydro-lyase</fullName>
    </alternativeName>
    <alternativeName>
        <fullName evidence="1">2-phosphoglycerate dehydratase</fullName>
    </alternativeName>
</protein>
<evidence type="ECO:0000255" key="1">
    <source>
        <dbReference type="HAMAP-Rule" id="MF_00318"/>
    </source>
</evidence>
<accession>A3ML77</accession>
<sequence>MSAIVDIIGREILDSRGNPTVECDVLLESGTMGRAAVPSGASTGSREAIELRDGEAGRYGGKGVLKAVEHINTEISEAIMGLDASEQAFLDKTLLELDGTDNKSRLGANAMLAVSMAVAKAAAEEAGLPLYRYFGGSGAMQLPVPMMNIVNGGAHANNSLDIQEFMIVPVSQPTFREALRCGAEVFHALKKILGDRGMSTAVGDEGGFAPNFGSNDECLSTILQAIEKAGYRAGEDVLLALDCAASEFYHDGKYQLAGEGLQLSSAEFTDYLATLADKFPIVSIEDGMHEGDWDGWKLLTERLGKKVQLVGDDLFVTNTRILKEGIEKGIANSILIKINQIGTLTETFAAIEMAKRARYTAVISHRSGETEDSTIADIAVGLNAGQIKTGSLSRSDRISKYNQLLRIEEDLGDIASYPGKSAFYNLR</sequence>
<dbReference type="EC" id="4.2.1.11" evidence="1"/>
<dbReference type="EMBL" id="CP000548">
    <property type="protein sequence ID" value="ABO06172.1"/>
    <property type="molecule type" value="Genomic_DNA"/>
</dbReference>
<dbReference type="RefSeq" id="WP_004192585.1">
    <property type="nucleotide sequence ID" value="NZ_CP007802.1"/>
</dbReference>
<dbReference type="SMR" id="A3ML77"/>
<dbReference type="GeneID" id="93060827"/>
<dbReference type="KEGG" id="bmaz:BM44_1681"/>
<dbReference type="KEGG" id="bmn:BMA10247_1466"/>
<dbReference type="PATRIC" id="fig|320389.8.peg.1880"/>
<dbReference type="UniPathway" id="UPA00109">
    <property type="reaction ID" value="UER00187"/>
</dbReference>
<dbReference type="GO" id="GO:0009986">
    <property type="term" value="C:cell surface"/>
    <property type="evidence" value="ECO:0007669"/>
    <property type="project" value="UniProtKB-SubCell"/>
</dbReference>
<dbReference type="GO" id="GO:0005576">
    <property type="term" value="C:extracellular region"/>
    <property type="evidence" value="ECO:0007669"/>
    <property type="project" value="UniProtKB-SubCell"/>
</dbReference>
<dbReference type="GO" id="GO:0000015">
    <property type="term" value="C:phosphopyruvate hydratase complex"/>
    <property type="evidence" value="ECO:0007669"/>
    <property type="project" value="InterPro"/>
</dbReference>
<dbReference type="GO" id="GO:0000287">
    <property type="term" value="F:magnesium ion binding"/>
    <property type="evidence" value="ECO:0007669"/>
    <property type="project" value="UniProtKB-UniRule"/>
</dbReference>
<dbReference type="GO" id="GO:0004634">
    <property type="term" value="F:phosphopyruvate hydratase activity"/>
    <property type="evidence" value="ECO:0007669"/>
    <property type="project" value="UniProtKB-UniRule"/>
</dbReference>
<dbReference type="GO" id="GO:0006096">
    <property type="term" value="P:glycolytic process"/>
    <property type="evidence" value="ECO:0007669"/>
    <property type="project" value="UniProtKB-UniRule"/>
</dbReference>
<dbReference type="CDD" id="cd03313">
    <property type="entry name" value="enolase"/>
    <property type="match status" value="1"/>
</dbReference>
<dbReference type="FunFam" id="3.20.20.120:FF:000001">
    <property type="entry name" value="Enolase"/>
    <property type="match status" value="1"/>
</dbReference>
<dbReference type="FunFam" id="3.30.390.10:FF:000001">
    <property type="entry name" value="Enolase"/>
    <property type="match status" value="1"/>
</dbReference>
<dbReference type="Gene3D" id="3.20.20.120">
    <property type="entry name" value="Enolase-like C-terminal domain"/>
    <property type="match status" value="1"/>
</dbReference>
<dbReference type="Gene3D" id="3.30.390.10">
    <property type="entry name" value="Enolase-like, N-terminal domain"/>
    <property type="match status" value="1"/>
</dbReference>
<dbReference type="HAMAP" id="MF_00318">
    <property type="entry name" value="Enolase"/>
    <property type="match status" value="1"/>
</dbReference>
<dbReference type="InterPro" id="IPR000941">
    <property type="entry name" value="Enolase"/>
</dbReference>
<dbReference type="InterPro" id="IPR036849">
    <property type="entry name" value="Enolase-like_C_sf"/>
</dbReference>
<dbReference type="InterPro" id="IPR029017">
    <property type="entry name" value="Enolase-like_N"/>
</dbReference>
<dbReference type="InterPro" id="IPR020810">
    <property type="entry name" value="Enolase_C"/>
</dbReference>
<dbReference type="InterPro" id="IPR020809">
    <property type="entry name" value="Enolase_CS"/>
</dbReference>
<dbReference type="InterPro" id="IPR020811">
    <property type="entry name" value="Enolase_N"/>
</dbReference>
<dbReference type="NCBIfam" id="TIGR01060">
    <property type="entry name" value="eno"/>
    <property type="match status" value="1"/>
</dbReference>
<dbReference type="PANTHER" id="PTHR11902">
    <property type="entry name" value="ENOLASE"/>
    <property type="match status" value="1"/>
</dbReference>
<dbReference type="PANTHER" id="PTHR11902:SF1">
    <property type="entry name" value="ENOLASE"/>
    <property type="match status" value="1"/>
</dbReference>
<dbReference type="Pfam" id="PF00113">
    <property type="entry name" value="Enolase_C"/>
    <property type="match status" value="1"/>
</dbReference>
<dbReference type="Pfam" id="PF03952">
    <property type="entry name" value="Enolase_N"/>
    <property type="match status" value="1"/>
</dbReference>
<dbReference type="PIRSF" id="PIRSF001400">
    <property type="entry name" value="Enolase"/>
    <property type="match status" value="1"/>
</dbReference>
<dbReference type="PRINTS" id="PR00148">
    <property type="entry name" value="ENOLASE"/>
</dbReference>
<dbReference type="SFLD" id="SFLDF00002">
    <property type="entry name" value="enolase"/>
    <property type="match status" value="1"/>
</dbReference>
<dbReference type="SFLD" id="SFLDG00178">
    <property type="entry name" value="enolase"/>
    <property type="match status" value="1"/>
</dbReference>
<dbReference type="SMART" id="SM01192">
    <property type="entry name" value="Enolase_C"/>
    <property type="match status" value="1"/>
</dbReference>
<dbReference type="SMART" id="SM01193">
    <property type="entry name" value="Enolase_N"/>
    <property type="match status" value="1"/>
</dbReference>
<dbReference type="SUPFAM" id="SSF51604">
    <property type="entry name" value="Enolase C-terminal domain-like"/>
    <property type="match status" value="1"/>
</dbReference>
<dbReference type="SUPFAM" id="SSF54826">
    <property type="entry name" value="Enolase N-terminal domain-like"/>
    <property type="match status" value="1"/>
</dbReference>
<dbReference type="PROSITE" id="PS00164">
    <property type="entry name" value="ENOLASE"/>
    <property type="match status" value="1"/>
</dbReference>
<keyword id="KW-0963">Cytoplasm</keyword>
<keyword id="KW-0324">Glycolysis</keyword>
<keyword id="KW-0456">Lyase</keyword>
<keyword id="KW-0460">Magnesium</keyword>
<keyword id="KW-0479">Metal-binding</keyword>
<keyword id="KW-0964">Secreted</keyword>
<comment type="function">
    <text evidence="1">Catalyzes the reversible conversion of 2-phosphoglycerate (2-PG) into phosphoenolpyruvate (PEP). It is essential for the degradation of carbohydrates via glycolysis.</text>
</comment>
<comment type="catalytic activity">
    <reaction evidence="1">
        <text>(2R)-2-phosphoglycerate = phosphoenolpyruvate + H2O</text>
        <dbReference type="Rhea" id="RHEA:10164"/>
        <dbReference type="ChEBI" id="CHEBI:15377"/>
        <dbReference type="ChEBI" id="CHEBI:58289"/>
        <dbReference type="ChEBI" id="CHEBI:58702"/>
        <dbReference type="EC" id="4.2.1.11"/>
    </reaction>
</comment>
<comment type="cofactor">
    <cofactor evidence="1">
        <name>Mg(2+)</name>
        <dbReference type="ChEBI" id="CHEBI:18420"/>
    </cofactor>
    <text evidence="1">Binds a second Mg(2+) ion via substrate during catalysis.</text>
</comment>
<comment type="pathway">
    <text evidence="1">Carbohydrate degradation; glycolysis; pyruvate from D-glyceraldehyde 3-phosphate: step 4/5.</text>
</comment>
<comment type="subcellular location">
    <subcellularLocation>
        <location evidence="1">Cytoplasm</location>
    </subcellularLocation>
    <subcellularLocation>
        <location evidence="1">Secreted</location>
    </subcellularLocation>
    <subcellularLocation>
        <location evidence="1">Cell surface</location>
    </subcellularLocation>
    <text evidence="1">Fractions of enolase are present in both the cytoplasm and on the cell surface.</text>
</comment>
<comment type="similarity">
    <text evidence="1">Belongs to the enolase family.</text>
</comment>
<gene>
    <name evidence="1" type="primary">eno</name>
    <name type="ordered locus">BMA10247_1466</name>
</gene>